<name>ARHGI_HUMAN</name>
<sequence>MGDDQEDDFPRRLSESMEDLSLDLGALQGSEYLQDLGLGAPSHSQPGETPDSRPTGEEPGRDSLFSSLAGSQDLSRRRSWERSRSCSESWRRLSLDASAVDEEPCLPRTLASLALNLPGGGLKTWTQGCLSGGGTPAESPGKECDSPKKRGRSRSVPVSFYEIRSPEISPGLEVPTPPVQGLEPPVLECMEKDHVEPDHVLIVQQVLQELRQYHGARQRACMSASPGGAHSNLTWFEFLSESEDGAGKNEKSDKSTSVKRRLSCLRSRVTRQKEKGKSPAHLKDKGQDARERRECVNGHQLLQGTFSGPSSCPLCGKPFLSSASLKEHPRGTLLSDGSPALSRNVGMTVSQKGGPQPTPSPAGPGTQLGPITGEMDEADSAFLKFKQTADDSLSLTSPNTESIFVEDPYTASLRSEIESDGHEFEAESWSLAVDAAYAKKQKREVVKRQDVLYELMQTEVHHVRTLKIMLKVYSRALQEELQFSSKAIGRLFPCADDLLETHSHFLARLKERRQESLEEGSDRNYVIQKIGDLLVQQFSGENGERMKEKYGVFCSGHNEAVSHYKLLLQQNKKFQNLIKKIGNFSIVRRLGVQECILLVTQRITKYPVLVERIIQNTEAGTEDYEDLTQALNLIKDIISQVDAKVSECEKGQRLREIAGKMDLKSSSKLKNGLTFRKEDMLQRQLHLEGMLCWKTTSGRLKDILAILLTDVLLLLQEKDQKYVFASVDSKPPVISLQKLIVREVANEEKAMFLISASLQGPEMYEIYTSSKEDRNAWMAHIQRAVESCPDEEEGPFSLPEEERKVVEARATRLRDFQERLSMKDQLIAQSLLEKQQIYLEMAEMGGLEDLPQPRGLFRGGDPSETLQGELILKSAMSEIEGIQSLICRQLGSANGQAEDGGSSTGPPRRAETFAGYDCTNSPTKNGSFKKKVSSTDPRPRDWRGPPNSPDLKLSDSDIPGSSEESPQVVEAPGTESDPRLPTVLESELVQRIQTLSQLLLNLQAVIAHQDSYVETQRAAIQEREKQFRLQSTRGNLLLEQERQRNFEKQREERAALEKLQSQLRHEQQRWERERQWQHQELERAGARLQEREGEARQLRERLEQERAELERQRQAYQHDLERLREAQRAVERERERLELLRRLKKQNTAPGALPPDTLAEAQPPSHPPSFNGEGLEGPRVSMLPSGVGPEYAERPEVARRDSAPTENRLAKSDVPIQLLSATNQFQRQAAVQQQIPTKLAASTKGGKDKGGKSRGSQRWESSASFDLKQQLLLNKLMGKDESTSRNRRSLSPILPGRHSPAPPPDPGFPAPSPPPADSPSEGFSLKAGGTALLPGPPAPSPLPATPLSAKEDASKEDVIFF</sequence>
<gene>
    <name type="primary">ARHGEF18</name>
    <name type="synonym">KIAA0521</name>
</gene>
<protein>
    <recommendedName>
        <fullName>Rho guanine nucleotide exchange factor 18</fullName>
    </recommendedName>
    <alternativeName>
        <fullName>114 kDa Rho-specific guanine nucleotide exchange factor</fullName>
        <shortName>p114-Rho-GEF</shortName>
        <shortName>p114RhoGEF</shortName>
    </alternativeName>
    <alternativeName>
        <fullName>Septin-associated RhoGEF</fullName>
        <shortName>SA-RhoGEF</shortName>
    </alternativeName>
</protein>
<keyword id="KW-0025">Alternative splicing</keyword>
<keyword id="KW-1003">Cell membrane</keyword>
<keyword id="KW-0175">Coiled coil</keyword>
<keyword id="KW-0963">Cytoplasm</keyword>
<keyword id="KW-0206">Cytoskeleton</keyword>
<keyword id="KW-0225">Disease variant</keyword>
<keyword id="KW-0344">Guanine-nucleotide releasing factor</keyword>
<keyword id="KW-0472">Membrane</keyword>
<keyword id="KW-0479">Metal-binding</keyword>
<keyword id="KW-0597">Phosphoprotein</keyword>
<keyword id="KW-1267">Proteomics identification</keyword>
<keyword id="KW-1185">Reference proteome</keyword>
<keyword id="KW-0682">Retinitis pigmentosa</keyword>
<keyword id="KW-0862">Zinc</keyword>
<keyword id="KW-0863">Zinc-finger</keyword>
<organism>
    <name type="scientific">Homo sapiens</name>
    <name type="common">Human</name>
    <dbReference type="NCBI Taxonomy" id="9606"/>
    <lineage>
        <taxon>Eukaryota</taxon>
        <taxon>Metazoa</taxon>
        <taxon>Chordata</taxon>
        <taxon>Craniata</taxon>
        <taxon>Vertebrata</taxon>
        <taxon>Euteleostomi</taxon>
        <taxon>Mammalia</taxon>
        <taxon>Eutheria</taxon>
        <taxon>Euarchontoglires</taxon>
        <taxon>Primates</taxon>
        <taxon>Haplorrhini</taxon>
        <taxon>Catarrhini</taxon>
        <taxon>Hominidae</taxon>
        <taxon>Homo</taxon>
    </lineage>
</organism>
<feature type="chain" id="PRO_0000341415" description="Rho guanine nucleotide exchange factor 18">
    <location>
        <begin position="1"/>
        <end position="1361"/>
    </location>
</feature>
<feature type="domain" description="DH" evidence="4">
    <location>
        <begin position="447"/>
        <end position="644"/>
    </location>
</feature>
<feature type="domain" description="PH" evidence="5">
    <location>
        <begin position="684"/>
        <end position="786"/>
    </location>
</feature>
<feature type="zinc finger region" description="C2H2-type; degenerate" evidence="3">
    <location>
        <begin position="310"/>
        <end position="334"/>
    </location>
</feature>
<feature type="region of interest" description="Disordered" evidence="6">
    <location>
        <begin position="33"/>
        <end position="88"/>
    </location>
</feature>
<feature type="region of interest" description="Disordered" evidence="6">
    <location>
        <begin position="131"/>
        <end position="156"/>
    </location>
</feature>
<feature type="region of interest" description="Disordered" evidence="6">
    <location>
        <begin position="244"/>
        <end position="292"/>
    </location>
</feature>
<feature type="region of interest" description="Disordered" evidence="6">
    <location>
        <begin position="348"/>
        <end position="368"/>
    </location>
</feature>
<feature type="region of interest" description="Disordered" evidence="6">
    <location>
        <begin position="893"/>
        <end position="980"/>
    </location>
</feature>
<feature type="region of interest" description="Disordered" evidence="6">
    <location>
        <begin position="1143"/>
        <end position="1211"/>
    </location>
</feature>
<feature type="region of interest" description="Disordered" evidence="6">
    <location>
        <begin position="1229"/>
        <end position="1264"/>
    </location>
</feature>
<feature type="region of interest" description="Disordered" evidence="6">
    <location>
        <begin position="1277"/>
        <end position="1361"/>
    </location>
</feature>
<feature type="coiled-coil region" evidence="2">
    <location>
        <begin position="1038"/>
        <end position="1148"/>
    </location>
</feature>
<feature type="compositionally biased region" description="Basic and acidic residues" evidence="6">
    <location>
        <begin position="50"/>
        <end position="61"/>
    </location>
</feature>
<feature type="compositionally biased region" description="Polar residues" evidence="6">
    <location>
        <begin position="64"/>
        <end position="73"/>
    </location>
</feature>
<feature type="compositionally biased region" description="Basic and acidic residues" evidence="6">
    <location>
        <begin position="74"/>
        <end position="88"/>
    </location>
</feature>
<feature type="compositionally biased region" description="Basic and acidic residues" evidence="6">
    <location>
        <begin position="245"/>
        <end position="256"/>
    </location>
</feature>
<feature type="compositionally biased region" description="Basic and acidic residues" evidence="6">
    <location>
        <begin position="271"/>
        <end position="292"/>
    </location>
</feature>
<feature type="compositionally biased region" description="Basic and acidic residues" evidence="6">
    <location>
        <begin position="1191"/>
        <end position="1211"/>
    </location>
</feature>
<feature type="compositionally biased region" description="Polar residues" evidence="6">
    <location>
        <begin position="1254"/>
        <end position="1264"/>
    </location>
</feature>
<feature type="compositionally biased region" description="Pro residues" evidence="6">
    <location>
        <begin position="1300"/>
        <end position="1317"/>
    </location>
</feature>
<feature type="compositionally biased region" description="Pro residues" evidence="6">
    <location>
        <begin position="1334"/>
        <end position="1344"/>
    </location>
</feature>
<feature type="compositionally biased region" description="Basic and acidic residues" evidence="6">
    <location>
        <begin position="1349"/>
        <end position="1361"/>
    </location>
</feature>
<feature type="modified residue" description="Phosphothreonine" evidence="1">
    <location>
        <position position="912"/>
    </location>
</feature>
<feature type="modified residue" description="Phosphoserine" evidence="1">
    <location>
        <position position="921"/>
    </location>
</feature>
<feature type="modified residue" description="Phosphoserine" evidence="1">
    <location>
        <position position="1289"/>
    </location>
</feature>
<feature type="modified residue" description="Phosphoserine" evidence="1">
    <location>
        <position position="1291"/>
    </location>
</feature>
<feature type="splice variant" id="VSP_059874" description="In isoform 4." evidence="15">
    <location>
        <begin position="1"/>
        <end position="346"/>
    </location>
</feature>
<feature type="splice variant" id="VSP_059875" description="In isoform 5." evidence="16">
    <original>MGDDQEDDFPRRLSESMEDLSLDLGALQGSEYLQDLGLGAPSHSQPGETPDSRPTGEEPGRDSLFSSLAGSQDLSRRRSWERSRSCSESWRRLSLDASAVDEEPCLPRTLASLALNLPGGGLKTWTQGCLSGGGTPAESPGKECDSPKKRGRSRSVPVSFYEIRSPEISPGLEVPTPPVQGLEPPVLECMEKDHVEPDHVLIVQQVLQELRQYHGARQRACMSASPGGAHSNLTWFEFLSESEDGAGKNEKSDKSTSVKRRLSCLRSRVTRQKEKGKSPAHLKDKGQDARERRECVNGHQLLQGTFSGPSSCPLCGKPFLSS</original>
    <variation>MVTVGTNILPSRPAASANTAREDAALFSRRIPPRHKNGAAQPGAAPGPGAPGANMGNAHSKSGDRHSALPGRPELSFYGSFPRKWSENVFLDNELLTSKILSMLRPQSERGFRAGDLRYPTHFLSTNSVLASVT</variation>
    <location>
        <begin position="1"/>
        <end position="322"/>
    </location>
</feature>
<feature type="splice variant" id="VSP_059876" description="In isoform 3." evidence="15">
    <location>
        <begin position="1"/>
        <end position="16"/>
    </location>
</feature>
<feature type="splice variant" id="VSP_059877" description="In isoform 2." evidence="15">
    <original>MGDDQ</original>
    <variation>MTTVA</variation>
    <location>
        <begin position="1"/>
        <end position="5"/>
    </location>
</feature>
<feature type="sequence variant" id="VAR_078919" description="In RP78; decreased function in positive regulation of Rho protein signal transduction; loss of function in regulation of actomyosin structure organization; dbSNP:rs987233144." evidence="12">
    <original>T</original>
    <variation>A</variation>
    <location>
        <position position="458"/>
    </location>
</feature>
<feature type="sequence variant" id="VAR_078920" description="In RP78." evidence="12">
    <location>
        <begin position="854"/>
        <end position="1361"/>
    </location>
</feature>
<feature type="sequence variant" id="VAR_044066" description="In dbSNP:rs2287918." evidence="9 14">
    <original>Q</original>
    <variation>R</variation>
    <location>
        <position position="889"/>
    </location>
</feature>
<feature type="sequence variant" id="VAR_044067" description="In dbSNP:rs2287920.">
    <original>R</original>
    <variation>Q</variation>
    <location>
        <position position="940"/>
    </location>
</feature>
<feature type="sequence variant" id="VAR_078921" description="In RP78." evidence="12">
    <location>
        <begin position="1066"/>
        <end position="1361"/>
    </location>
</feature>
<feature type="sequence variant" id="VAR_078922" description="In RP78; no effect on function in positive regulation of Rho protein signal transduction; decreased function in regulation of actomyosin structure organization." evidence="12">
    <location>
        <begin position="1101"/>
        <end position="1108"/>
    </location>
</feature>
<feature type="sequence variant" id="VAR_063099" description="In dbSNP:rs9329368." evidence="9 14">
    <original>N</original>
    <variation>S</variation>
    <location>
        <position position="1207"/>
    </location>
</feature>
<feature type="sequence conflict" description="In Ref. 2; BAC86801." evidence="16" ref="2">
    <original>I</original>
    <variation>V</variation>
    <location>
        <position position="371"/>
    </location>
</feature>
<feature type="sequence conflict" description="In Ref. 2; BAC86801." evidence="16" ref="2">
    <original>P</original>
    <variation>S</variation>
    <location>
        <position position="1295"/>
    </location>
</feature>
<reference key="1">
    <citation type="journal article" date="1998" name="DNA Res.">
        <title>Prediction of the coding sequences of unidentified human genes. IX. The complete sequences of 100 new cDNA clones from brain which can code for large proteins in vitro.</title>
        <authorList>
            <person name="Nagase T."/>
            <person name="Ishikawa K."/>
            <person name="Miyajima N."/>
            <person name="Tanaka A."/>
            <person name="Kotani H."/>
            <person name="Nomura N."/>
            <person name="Ohara O."/>
        </authorList>
    </citation>
    <scope>NUCLEOTIDE SEQUENCE [LARGE SCALE MRNA] (ISOFORM 4)</scope>
    <scope>VARIANTS ARG-889 AND SER-1207</scope>
    <source>
        <tissue>Brain</tissue>
    </source>
</reference>
<reference key="2">
    <citation type="journal article" date="2004" name="Nat. Genet.">
        <title>Complete sequencing and characterization of 21,243 full-length human cDNAs.</title>
        <authorList>
            <person name="Ota T."/>
            <person name="Suzuki Y."/>
            <person name="Nishikawa T."/>
            <person name="Otsuki T."/>
            <person name="Sugiyama T."/>
            <person name="Irie R."/>
            <person name="Wakamatsu A."/>
            <person name="Hayashi K."/>
            <person name="Sato H."/>
            <person name="Nagai K."/>
            <person name="Kimura K."/>
            <person name="Makita H."/>
            <person name="Sekine M."/>
            <person name="Obayashi M."/>
            <person name="Nishi T."/>
            <person name="Shibahara T."/>
            <person name="Tanaka T."/>
            <person name="Ishii S."/>
            <person name="Yamamoto J."/>
            <person name="Saito K."/>
            <person name="Kawai Y."/>
            <person name="Isono Y."/>
            <person name="Nakamura Y."/>
            <person name="Nagahari K."/>
            <person name="Murakami K."/>
            <person name="Yasuda T."/>
            <person name="Iwayanagi T."/>
            <person name="Wagatsuma M."/>
            <person name="Shiratori A."/>
            <person name="Sudo H."/>
            <person name="Hosoiri T."/>
            <person name="Kaku Y."/>
            <person name="Kodaira H."/>
            <person name="Kondo H."/>
            <person name="Sugawara M."/>
            <person name="Takahashi M."/>
            <person name="Kanda K."/>
            <person name="Yokoi T."/>
            <person name="Furuya T."/>
            <person name="Kikkawa E."/>
            <person name="Omura Y."/>
            <person name="Abe K."/>
            <person name="Kamihara K."/>
            <person name="Katsuta N."/>
            <person name="Sato K."/>
            <person name="Tanikawa M."/>
            <person name="Yamazaki M."/>
            <person name="Ninomiya K."/>
            <person name="Ishibashi T."/>
            <person name="Yamashita H."/>
            <person name="Murakawa K."/>
            <person name="Fujimori K."/>
            <person name="Tanai H."/>
            <person name="Kimata M."/>
            <person name="Watanabe M."/>
            <person name="Hiraoka S."/>
            <person name="Chiba Y."/>
            <person name="Ishida S."/>
            <person name="Ono Y."/>
            <person name="Takiguchi S."/>
            <person name="Watanabe S."/>
            <person name="Yosida M."/>
            <person name="Hotuta T."/>
            <person name="Kusano J."/>
            <person name="Kanehori K."/>
            <person name="Takahashi-Fujii A."/>
            <person name="Hara H."/>
            <person name="Tanase T.-O."/>
            <person name="Nomura Y."/>
            <person name="Togiya S."/>
            <person name="Komai F."/>
            <person name="Hara R."/>
            <person name="Takeuchi K."/>
            <person name="Arita M."/>
            <person name="Imose N."/>
            <person name="Musashino K."/>
            <person name="Yuuki H."/>
            <person name="Oshima A."/>
            <person name="Sasaki N."/>
            <person name="Aotsuka S."/>
            <person name="Yoshikawa Y."/>
            <person name="Matsunawa H."/>
            <person name="Ichihara T."/>
            <person name="Shiohata N."/>
            <person name="Sano S."/>
            <person name="Moriya S."/>
            <person name="Momiyama H."/>
            <person name="Satoh N."/>
            <person name="Takami S."/>
            <person name="Terashima Y."/>
            <person name="Suzuki O."/>
            <person name="Nakagawa S."/>
            <person name="Senoh A."/>
            <person name="Mizoguchi H."/>
            <person name="Goto Y."/>
            <person name="Shimizu F."/>
            <person name="Wakebe H."/>
            <person name="Hishigaki H."/>
            <person name="Watanabe T."/>
            <person name="Sugiyama A."/>
            <person name="Takemoto M."/>
            <person name="Kawakami B."/>
            <person name="Yamazaki M."/>
            <person name="Watanabe K."/>
            <person name="Kumagai A."/>
            <person name="Itakura S."/>
            <person name="Fukuzumi Y."/>
            <person name="Fujimori Y."/>
            <person name="Komiyama M."/>
            <person name="Tashiro H."/>
            <person name="Tanigami A."/>
            <person name="Fujiwara T."/>
            <person name="Ono T."/>
            <person name="Yamada K."/>
            <person name="Fujii Y."/>
            <person name="Ozaki K."/>
            <person name="Hirao M."/>
            <person name="Ohmori Y."/>
            <person name="Kawabata A."/>
            <person name="Hikiji T."/>
            <person name="Kobatake N."/>
            <person name="Inagaki H."/>
            <person name="Ikema Y."/>
            <person name="Okamoto S."/>
            <person name="Okitani R."/>
            <person name="Kawakami T."/>
            <person name="Noguchi S."/>
            <person name="Itoh T."/>
            <person name="Shigeta K."/>
            <person name="Senba T."/>
            <person name="Matsumura K."/>
            <person name="Nakajima Y."/>
            <person name="Mizuno T."/>
            <person name="Morinaga M."/>
            <person name="Sasaki M."/>
            <person name="Togashi T."/>
            <person name="Oyama M."/>
            <person name="Hata H."/>
            <person name="Watanabe M."/>
            <person name="Komatsu T."/>
            <person name="Mizushima-Sugano J."/>
            <person name="Satoh T."/>
            <person name="Shirai Y."/>
            <person name="Takahashi Y."/>
            <person name="Nakagawa K."/>
            <person name="Okumura K."/>
            <person name="Nagase T."/>
            <person name="Nomura N."/>
            <person name="Kikuchi H."/>
            <person name="Masuho Y."/>
            <person name="Yamashita R."/>
            <person name="Nakai K."/>
            <person name="Yada T."/>
            <person name="Nakamura Y."/>
            <person name="Ohara O."/>
            <person name="Isogai T."/>
            <person name="Sugano S."/>
        </authorList>
    </citation>
    <scope>NUCLEOTIDE SEQUENCE [LARGE SCALE MRNA] (ISOFORM 5)</scope>
    <source>
        <tissue>Brain</tissue>
    </source>
</reference>
<reference key="3">
    <citation type="journal article" date="2004" name="Nature">
        <title>The DNA sequence and biology of human chromosome 19.</title>
        <authorList>
            <person name="Grimwood J."/>
            <person name="Gordon L.A."/>
            <person name="Olsen A.S."/>
            <person name="Terry A."/>
            <person name="Schmutz J."/>
            <person name="Lamerdin J.E."/>
            <person name="Hellsten U."/>
            <person name="Goodstein D."/>
            <person name="Couronne O."/>
            <person name="Tran-Gyamfi M."/>
            <person name="Aerts A."/>
            <person name="Altherr M."/>
            <person name="Ashworth L."/>
            <person name="Bajorek E."/>
            <person name="Black S."/>
            <person name="Branscomb E."/>
            <person name="Caenepeel S."/>
            <person name="Carrano A.V."/>
            <person name="Caoile C."/>
            <person name="Chan Y.M."/>
            <person name="Christensen M."/>
            <person name="Cleland C.A."/>
            <person name="Copeland A."/>
            <person name="Dalin E."/>
            <person name="Dehal P."/>
            <person name="Denys M."/>
            <person name="Detter J.C."/>
            <person name="Escobar J."/>
            <person name="Flowers D."/>
            <person name="Fotopulos D."/>
            <person name="Garcia C."/>
            <person name="Georgescu A.M."/>
            <person name="Glavina T."/>
            <person name="Gomez M."/>
            <person name="Gonzales E."/>
            <person name="Groza M."/>
            <person name="Hammon N."/>
            <person name="Hawkins T."/>
            <person name="Haydu L."/>
            <person name="Ho I."/>
            <person name="Huang W."/>
            <person name="Israni S."/>
            <person name="Jett J."/>
            <person name="Kadner K."/>
            <person name="Kimball H."/>
            <person name="Kobayashi A."/>
            <person name="Larionov V."/>
            <person name="Leem S.-H."/>
            <person name="Lopez F."/>
            <person name="Lou Y."/>
            <person name="Lowry S."/>
            <person name="Malfatti S."/>
            <person name="Martinez D."/>
            <person name="McCready P.M."/>
            <person name="Medina C."/>
            <person name="Morgan J."/>
            <person name="Nelson K."/>
            <person name="Nolan M."/>
            <person name="Ovcharenko I."/>
            <person name="Pitluck S."/>
            <person name="Pollard M."/>
            <person name="Popkie A.P."/>
            <person name="Predki P."/>
            <person name="Quan G."/>
            <person name="Ramirez L."/>
            <person name="Rash S."/>
            <person name="Retterer J."/>
            <person name="Rodriguez A."/>
            <person name="Rogers S."/>
            <person name="Salamov A."/>
            <person name="Salazar A."/>
            <person name="She X."/>
            <person name="Smith D."/>
            <person name="Slezak T."/>
            <person name="Solovyev V."/>
            <person name="Thayer N."/>
            <person name="Tice H."/>
            <person name="Tsai M."/>
            <person name="Ustaszewska A."/>
            <person name="Vo N."/>
            <person name="Wagner M."/>
            <person name="Wheeler J."/>
            <person name="Wu K."/>
            <person name="Xie G."/>
            <person name="Yang J."/>
            <person name="Dubchak I."/>
            <person name="Furey T.S."/>
            <person name="DeJong P."/>
            <person name="Dickson M."/>
            <person name="Gordon D."/>
            <person name="Eichler E.E."/>
            <person name="Pennacchio L.A."/>
            <person name="Richardson P."/>
            <person name="Stubbs L."/>
            <person name="Rokhsar D.S."/>
            <person name="Myers R.M."/>
            <person name="Rubin E.M."/>
            <person name="Lucas S.M."/>
        </authorList>
    </citation>
    <scope>NUCLEOTIDE SEQUENCE [LARGE SCALE GENOMIC DNA]</scope>
</reference>
<reference key="4">
    <citation type="journal article" date="2004" name="Genome Res.">
        <title>The status, quality, and expansion of the NIH full-length cDNA project: the Mammalian Gene Collection (MGC).</title>
        <authorList>
            <consortium name="The MGC Project Team"/>
        </authorList>
    </citation>
    <scope>NUCLEOTIDE SEQUENCE [LARGE SCALE MRNA] OF 1-1344 (ISOFORM 4)</scope>
    <scope>VARIANTS ARG-889 AND SER-1207</scope>
    <source>
        <tissue>Lymph</tissue>
    </source>
</reference>
<reference key="5">
    <citation type="journal article" date="2000" name="Biochem. J.">
        <title>Identification and characterization of a novel Rho-specific guanine nucleotide exchange factor.</title>
        <authorList>
            <person name="Blomquist A."/>
            <person name="Schwoerer G."/>
            <person name="Schablowski H."/>
            <person name="Psoma A."/>
            <person name="Lehnen M."/>
            <person name="Jakobs K.H."/>
            <person name="Ruemenapp U."/>
        </authorList>
    </citation>
    <scope>FUNCTION</scope>
    <scope>TISSUE SPECIFICITY</scope>
</reference>
<reference key="6">
    <citation type="journal article" date="2001" name="Genomics">
        <title>A physical and transcript map of the MCOLN1 gene region on human chromosome 19p13.3-p13.2.</title>
        <authorList>
            <person name="Acierno J.S. Jr."/>
            <person name="Kennedy J.C."/>
            <person name="Falardeau J.L."/>
            <person name="Leyne M."/>
            <person name="Bromley M.C."/>
            <person name="Colman M.W."/>
            <person name="Sun M."/>
            <person name="Bove C."/>
            <person name="Ashworth L.K."/>
            <person name="Chadwick L.H."/>
            <person name="Schiripo T."/>
            <person name="Ma S."/>
            <person name="Goldin E."/>
            <person name="Schiffmann R."/>
            <person name="Slaugenhaupt S.A."/>
        </authorList>
    </citation>
    <scope>IDENTIFICATION</scope>
</reference>
<reference key="7">
    <citation type="journal article" date="2003" name="Circ. Res.">
        <title>G Protein betagamma subunits stimulate p114RhoGEF, a guanine nucleotide exchange factor for RhoA and Rac1: regulation of cell shape and reactive oxygen species production.</title>
        <authorList>
            <person name="Niu J."/>
            <person name="Profirovic J."/>
            <person name="Pan H."/>
            <person name="Vaiskunaite R."/>
            <person name="Voyno-Yasenetskaya T."/>
        </authorList>
    </citation>
    <scope>FUNCTION</scope>
    <scope>TISSUE SPECIFICITY</scope>
    <scope>INTERACTION WITH GNB1 AND GNG2</scope>
</reference>
<reference key="8">
    <citation type="journal article" date="2005" name="Oncogene">
        <title>Cytoskeletal modification of Rho guanine nucleotide exchange factor activity: identification of a Rho guanine nucleotide exchange factor as a binding partner for Sept9b, a mammalian septin.</title>
        <authorList>
            <person name="Nagata K."/>
            <person name="Inagaki M."/>
        </authorList>
    </citation>
    <scope>FUNCTION</scope>
    <scope>SUBCELLULAR LOCATION</scope>
    <scope>TISSUE SPECIFICITY</scope>
    <scope>INTERACTION WITH SEPT9</scope>
</reference>
<reference key="9">
    <citation type="journal article" date="2008" name="Proc. Natl. Acad. Sci. U.S.A.">
        <title>A quantitative atlas of mitotic phosphorylation.</title>
        <authorList>
            <person name="Dephoure N."/>
            <person name="Zhou C."/>
            <person name="Villen J."/>
            <person name="Beausoleil S.A."/>
            <person name="Bakalarski C.E."/>
            <person name="Elledge S.J."/>
            <person name="Gygi S.P."/>
        </authorList>
    </citation>
    <scope>IDENTIFICATION BY MASS SPECTROMETRY [LARGE SCALE ANALYSIS]</scope>
    <source>
        <tissue>Cervix carcinoma</tissue>
    </source>
</reference>
<reference key="10">
    <citation type="journal article" date="2011" name="BMC Syst. Biol.">
        <title>Initial characterization of the human central proteome.</title>
        <authorList>
            <person name="Burkard T.R."/>
            <person name="Planyavsky M."/>
            <person name="Kaupe I."/>
            <person name="Breitwieser F.P."/>
            <person name="Buerckstuemmer T."/>
            <person name="Bennett K.L."/>
            <person name="Superti-Furga G."/>
            <person name="Colinge J."/>
        </authorList>
    </citation>
    <scope>IDENTIFICATION BY MASS SPECTROMETRY [LARGE SCALE ANALYSIS]</scope>
</reference>
<reference key="11">
    <citation type="journal article" date="2011" name="J. Cell Biol.">
        <title>Lulu2 regulates the circumferential actomyosin tensile system in epithelial cells through p114RhoGEF.</title>
        <authorList>
            <person name="Nakajima H."/>
            <person name="Tanoue T."/>
        </authorList>
    </citation>
    <scope>FUNCTION</scope>
    <scope>INTERACTION WITH EPB41L4B AND PATJ</scope>
    <scope>SUBCELLULAR LOCATION</scope>
</reference>
<reference key="12">
    <citation type="journal article" date="2018" name="J. Leukoc. Biol.">
        <title>Expression of novel 'LOCGEF' isoforms of ARHGEF18 in eosinophils.</title>
        <authorList>
            <person name="Turton K.B."/>
            <person name="Wilkerson E.M."/>
            <person name="Hebert A.S."/>
            <person name="Fogerty F.J."/>
            <person name="Schira H.M."/>
            <person name="Botros F.E."/>
            <person name="Coon J.J."/>
            <person name="Mosher D.F."/>
        </authorList>
    </citation>
    <scope>ALTERNATIVE SPLICING (ISOFORMS 1; 2 AND 3)</scope>
    <scope>SUBCELLULAR LOCATION</scope>
    <scope>TISSUE SPECIFICITY (ISOFORMS 1; 2; 3 AND 4)</scope>
    <scope>IDENTIFICATION BY MASS SPECTROMETRY</scope>
</reference>
<reference key="13">
    <citation type="journal article" date="2017" name="Am. J. Hum. Genet.">
        <title>Biallelic mutation of ARHGEF18, involved in the determination of epithelial apicobasal polarity, causes adult-onset retinal degeneration.</title>
        <authorList>
            <consortium name="UK Inherited Retinal Disease Consortium"/>
            <consortium name="NIHR Bioresource - Rare Diseases Consortium"/>
            <person name="Arno G."/>
            <person name="Carss K.J."/>
            <person name="Hull S."/>
            <person name="Zihni C."/>
            <person name="Robson A.G."/>
            <person name="Fiorentino A."/>
            <person name="Hardcastle A.J."/>
            <person name="Holder G.E."/>
            <person name="Cheetham M.E."/>
            <person name="Plagnol V."/>
            <person name="Moore A.T."/>
            <person name="Raymond F.L."/>
            <person name="Matter K."/>
            <person name="Balda M.S."/>
            <person name="Webster A.R."/>
        </authorList>
    </citation>
    <scope>FUNCTION</scope>
    <scope>INVOLVEMENT IN RP78</scope>
    <scope>VARIANTS RP78 ALA-458; 854-ARG--PHE-1361 DEL; 1066-GLU--PHE-1361 DEL AND 1101-ARG--GLU-1108 DEL</scope>
    <scope>CHARACTERIZATION OF VARIANTS RP78 ALA-458 AND 1101-ARG--GLU-1108 DEL</scope>
</reference>
<dbReference type="EMBL" id="AB011093">
    <property type="protein sequence ID" value="BAA25447.1"/>
    <property type="status" value="ALT_INIT"/>
    <property type="molecule type" value="mRNA"/>
</dbReference>
<dbReference type="EMBL" id="AK127045">
    <property type="protein sequence ID" value="BAC86801.1"/>
    <property type="molecule type" value="mRNA"/>
</dbReference>
<dbReference type="EMBL" id="AC008878">
    <property type="status" value="NOT_ANNOTATED_CDS"/>
    <property type="molecule type" value="Genomic_DNA"/>
</dbReference>
<dbReference type="EMBL" id="AC119396">
    <property type="status" value="NOT_ANNOTATED_CDS"/>
    <property type="molecule type" value="Genomic_DNA"/>
</dbReference>
<dbReference type="EMBL" id="AC126754">
    <property type="status" value="NOT_ANNOTATED_CDS"/>
    <property type="molecule type" value="Genomic_DNA"/>
</dbReference>
<dbReference type="EMBL" id="BC077721">
    <property type="protein sequence ID" value="AAH77721.1"/>
    <property type="status" value="ALT_SEQ"/>
    <property type="molecule type" value="mRNA"/>
</dbReference>
<dbReference type="CCDS" id="CCDS12177.1">
    <molecule id="Q6ZSZ5-2"/>
</dbReference>
<dbReference type="CCDS" id="CCDS92502.1">
    <molecule id="Q6ZSZ5-4"/>
</dbReference>
<dbReference type="RefSeq" id="NP_001124427.1">
    <property type="nucleotide sequence ID" value="NM_001130955.1"/>
</dbReference>
<dbReference type="RefSeq" id="NP_001354752.1">
    <molecule id="Q6ZSZ5-4"/>
    <property type="nucleotide sequence ID" value="NM_001367823.1"/>
</dbReference>
<dbReference type="RefSeq" id="NP_001354753.1">
    <molecule id="Q6ZSZ5-2"/>
    <property type="nucleotide sequence ID" value="NM_001367824.1"/>
</dbReference>
<dbReference type="RefSeq" id="NP_056133.2">
    <molecule id="Q6ZSZ5-2"/>
    <property type="nucleotide sequence ID" value="NM_015318.3"/>
</dbReference>
<dbReference type="RefSeq" id="XP_006722768.1">
    <property type="nucleotide sequence ID" value="XM_006722705.3"/>
</dbReference>
<dbReference type="RefSeq" id="XP_006722769.1">
    <molecule id="Q6ZSZ5-4"/>
    <property type="nucleotide sequence ID" value="XM_006722706.4"/>
</dbReference>
<dbReference type="RefSeq" id="XP_006722771.1">
    <property type="nucleotide sequence ID" value="XM_006722708.2"/>
</dbReference>
<dbReference type="RefSeq" id="XP_011526140.1">
    <property type="nucleotide sequence ID" value="XM_011527838.2"/>
</dbReference>
<dbReference type="RefSeq" id="XP_011526141.1">
    <molecule id="Q6ZSZ5-6"/>
    <property type="nucleotide sequence ID" value="XM_011527839.3"/>
</dbReference>
<dbReference type="RefSeq" id="XP_011526142.1">
    <property type="nucleotide sequence ID" value="XM_011527840.1"/>
</dbReference>
<dbReference type="RefSeq" id="XP_047294482.1">
    <molecule id="Q6ZSZ5-2"/>
    <property type="nucleotide sequence ID" value="XM_047438526.1"/>
</dbReference>
<dbReference type="RefSeq" id="XP_047294484.1">
    <molecule id="Q6ZSZ5-2"/>
    <property type="nucleotide sequence ID" value="XM_047438528.1"/>
</dbReference>
<dbReference type="RefSeq" id="XP_054176351.1">
    <molecule id="Q6ZSZ5-4"/>
    <property type="nucleotide sequence ID" value="XM_054320376.1"/>
</dbReference>
<dbReference type="RefSeq" id="XP_054176352.1">
    <molecule id="Q6ZSZ5-6"/>
    <property type="nucleotide sequence ID" value="XM_054320377.1"/>
</dbReference>
<dbReference type="RefSeq" id="XP_054176353.1">
    <molecule id="Q6ZSZ5-2"/>
    <property type="nucleotide sequence ID" value="XM_054320378.1"/>
</dbReference>
<dbReference type="RefSeq" id="XP_054176354.1">
    <molecule id="Q6ZSZ5-2"/>
    <property type="nucleotide sequence ID" value="XM_054320379.1"/>
</dbReference>
<dbReference type="RefSeq" id="XP_054176356.1">
    <molecule id="Q6ZSZ5-2"/>
    <property type="nucleotide sequence ID" value="XM_054320381.1"/>
</dbReference>
<dbReference type="SMR" id="Q6ZSZ5"/>
<dbReference type="BioGRID" id="116950">
    <property type="interactions" value="46"/>
</dbReference>
<dbReference type="CORUM" id="Q6ZSZ5"/>
<dbReference type="FunCoup" id="Q6ZSZ5">
    <property type="interactions" value="1054"/>
</dbReference>
<dbReference type="IntAct" id="Q6ZSZ5">
    <property type="interactions" value="14"/>
</dbReference>
<dbReference type="MINT" id="Q6ZSZ5"/>
<dbReference type="STRING" id="9606.ENSP00000499655"/>
<dbReference type="GlyGen" id="Q6ZSZ5">
    <property type="glycosylation" value="3 sites"/>
</dbReference>
<dbReference type="iPTMnet" id="Q6ZSZ5"/>
<dbReference type="PhosphoSitePlus" id="Q6ZSZ5"/>
<dbReference type="BioMuta" id="-"/>
<dbReference type="BioMuta" id="ARHGEF18"/>
<dbReference type="DMDM" id="296439444"/>
<dbReference type="jPOST" id="Q6ZSZ5"/>
<dbReference type="MassIVE" id="Q6ZSZ5"/>
<dbReference type="PaxDb" id="9606-ENSP00000471635"/>
<dbReference type="PeptideAtlas" id="Q6ZSZ5"/>
<dbReference type="ProteomicsDB" id="68246">
    <molecule id="Q6ZSZ5-1"/>
</dbReference>
<dbReference type="ProteomicsDB" id="68247">
    <molecule id="Q6ZSZ5-2"/>
</dbReference>
<dbReference type="Pumba" id="Q6ZSZ5"/>
<dbReference type="Antibodypedia" id="24427">
    <property type="antibodies" value="286 antibodies from 30 providers"/>
</dbReference>
<dbReference type="DNASU" id="23370"/>
<dbReference type="Ensembl" id="ENST00000594665.2">
    <molecule id="Q6ZSZ5-2"/>
    <property type="protein sequence ID" value="ENSP00000470729.2"/>
    <property type="gene ID" value="ENSG00000104880.19"/>
</dbReference>
<dbReference type="Ensembl" id="ENST00000617428.4">
    <molecule id="Q6ZSZ5-2"/>
    <property type="protein sequence ID" value="ENSP00000482647.4"/>
    <property type="gene ID" value="ENSG00000104880.19"/>
</dbReference>
<dbReference type="Ensembl" id="ENST00000668164.2">
    <molecule id="Q6ZSZ5-4"/>
    <property type="protein sequence ID" value="ENSP00000499655.2"/>
    <property type="gene ID" value="ENSG00000104880.19"/>
</dbReference>
<dbReference type="GeneID" id="23370"/>
<dbReference type="KEGG" id="hsa:23370"/>
<dbReference type="MANE-Select" id="ENST00000668164.2">
    <property type="protein sequence ID" value="ENSP00000499655.2"/>
    <property type="RefSeq nucleotide sequence ID" value="NM_001367823.1"/>
    <property type="RefSeq protein sequence ID" value="NP_001354752.1"/>
</dbReference>
<dbReference type="UCSC" id="uc002mgh.4">
    <molecule id="Q6ZSZ5-4"/>
    <property type="organism name" value="human"/>
</dbReference>
<dbReference type="AGR" id="HGNC:17090"/>
<dbReference type="CTD" id="23370"/>
<dbReference type="DisGeNET" id="23370"/>
<dbReference type="GeneCards" id="ARHGEF18"/>
<dbReference type="HGNC" id="HGNC:17090">
    <property type="gene designation" value="ARHGEF18"/>
</dbReference>
<dbReference type="HPA" id="ENSG00000104880">
    <property type="expression patterns" value="Low tissue specificity"/>
</dbReference>
<dbReference type="MalaCards" id="ARHGEF18"/>
<dbReference type="MIM" id="616432">
    <property type="type" value="gene"/>
</dbReference>
<dbReference type="MIM" id="617433">
    <property type="type" value="phenotype"/>
</dbReference>
<dbReference type="neXtProt" id="NX_Q6ZSZ5"/>
<dbReference type="OpenTargets" id="ENSG00000104880"/>
<dbReference type="Orphanet" id="791">
    <property type="disease" value="Retinitis pigmentosa"/>
</dbReference>
<dbReference type="PharmGKB" id="PA128394630"/>
<dbReference type="VEuPathDB" id="HostDB:ENSG00000104880"/>
<dbReference type="eggNOG" id="ENOG502SGX7">
    <property type="taxonomic scope" value="Eukaryota"/>
</dbReference>
<dbReference type="eggNOG" id="KOG3520">
    <property type="taxonomic scope" value="Eukaryota"/>
</dbReference>
<dbReference type="GeneTree" id="ENSGT00940000157375"/>
<dbReference type="HOGENOM" id="CLU_002466_0_0_1"/>
<dbReference type="InParanoid" id="Q6ZSZ5"/>
<dbReference type="OMA" id="EDRNSWM"/>
<dbReference type="OrthoDB" id="28045at2759"/>
<dbReference type="PAN-GO" id="Q6ZSZ5">
    <property type="GO annotations" value="2 GO annotations based on evolutionary models"/>
</dbReference>
<dbReference type="PhylomeDB" id="Q6ZSZ5"/>
<dbReference type="TreeFam" id="TF325887"/>
<dbReference type="TreeFam" id="TF353495"/>
<dbReference type="PathwayCommons" id="Q6ZSZ5"/>
<dbReference type="Reactome" id="R-HSA-193648">
    <property type="pathway name" value="NRAGE signals death through JNK"/>
</dbReference>
<dbReference type="Reactome" id="R-HSA-2173791">
    <property type="pathway name" value="TGF-beta receptor signaling in EMT (epithelial to mesenchymal transition)"/>
</dbReference>
<dbReference type="Reactome" id="R-HSA-416482">
    <property type="pathway name" value="G alpha (12/13) signalling events"/>
</dbReference>
<dbReference type="Reactome" id="R-HSA-8980692">
    <property type="pathway name" value="RHOA GTPase cycle"/>
</dbReference>
<dbReference type="Reactome" id="R-HSA-9013149">
    <property type="pathway name" value="RAC1 GTPase cycle"/>
</dbReference>
<dbReference type="SignaLink" id="Q6ZSZ5"/>
<dbReference type="SIGNOR" id="Q6ZSZ5"/>
<dbReference type="BioGRID-ORCS" id="23370">
    <property type="hits" value="13 hits in 1155 CRISPR screens"/>
</dbReference>
<dbReference type="ChiTaRS" id="ARHGEF18">
    <property type="organism name" value="human"/>
</dbReference>
<dbReference type="GenomeRNAi" id="23370"/>
<dbReference type="Pharos" id="Q6ZSZ5">
    <property type="development level" value="Tbio"/>
</dbReference>
<dbReference type="PRO" id="PR:Q6ZSZ5"/>
<dbReference type="Proteomes" id="UP000005640">
    <property type="component" value="Chromosome 19"/>
</dbReference>
<dbReference type="RNAct" id="Q6ZSZ5">
    <property type="molecule type" value="protein"/>
</dbReference>
<dbReference type="Bgee" id="ENSG00000104880">
    <property type="expression patterns" value="Expressed in pancreatic ductal cell and 197 other cell types or tissues"/>
</dbReference>
<dbReference type="ExpressionAtlas" id="Q6ZSZ5">
    <property type="expression patterns" value="baseline and differential"/>
</dbReference>
<dbReference type="GO" id="GO:0045177">
    <property type="term" value="C:apical part of cell"/>
    <property type="evidence" value="ECO:0000314"/>
    <property type="project" value="MGI"/>
</dbReference>
<dbReference type="GO" id="GO:0016324">
    <property type="term" value="C:apical plasma membrane"/>
    <property type="evidence" value="ECO:0007669"/>
    <property type="project" value="UniProtKB-SubCell"/>
</dbReference>
<dbReference type="GO" id="GO:0030054">
    <property type="term" value="C:cell junction"/>
    <property type="evidence" value="ECO:0000304"/>
    <property type="project" value="Reactome"/>
</dbReference>
<dbReference type="GO" id="GO:0005856">
    <property type="term" value="C:cytoskeleton"/>
    <property type="evidence" value="ECO:0007669"/>
    <property type="project" value="UniProtKB-SubCell"/>
</dbReference>
<dbReference type="GO" id="GO:0005829">
    <property type="term" value="C:cytosol"/>
    <property type="evidence" value="ECO:0000314"/>
    <property type="project" value="HPA"/>
</dbReference>
<dbReference type="GO" id="GO:0070062">
    <property type="term" value="C:extracellular exosome"/>
    <property type="evidence" value="ECO:0007005"/>
    <property type="project" value="UniProtKB"/>
</dbReference>
<dbReference type="GO" id="GO:0005886">
    <property type="term" value="C:plasma membrane"/>
    <property type="evidence" value="ECO:0000314"/>
    <property type="project" value="HPA"/>
</dbReference>
<dbReference type="GO" id="GO:0005085">
    <property type="term" value="F:guanyl-nucleotide exchange factor activity"/>
    <property type="evidence" value="ECO:0000314"/>
    <property type="project" value="MGI"/>
</dbReference>
<dbReference type="GO" id="GO:0008270">
    <property type="term" value="F:zinc ion binding"/>
    <property type="evidence" value="ECO:0007669"/>
    <property type="project" value="UniProtKB-KW"/>
</dbReference>
<dbReference type="GO" id="GO:0030036">
    <property type="term" value="P:actin cytoskeleton organization"/>
    <property type="evidence" value="ECO:0000314"/>
    <property type="project" value="MGI"/>
</dbReference>
<dbReference type="GO" id="GO:0051497">
    <property type="term" value="P:negative regulation of stress fiber assembly"/>
    <property type="evidence" value="ECO:0000315"/>
    <property type="project" value="ARUK-UCL"/>
</dbReference>
<dbReference type="GO" id="GO:0150105">
    <property type="term" value="P:protein localization to cell-cell junction"/>
    <property type="evidence" value="ECO:0000315"/>
    <property type="project" value="ARUK-UCL"/>
</dbReference>
<dbReference type="GO" id="GO:0008360">
    <property type="term" value="P:regulation of cell shape"/>
    <property type="evidence" value="ECO:0000314"/>
    <property type="project" value="MGI"/>
</dbReference>
<dbReference type="GO" id="GO:0035023">
    <property type="term" value="P:regulation of Rho protein signal transduction"/>
    <property type="evidence" value="ECO:0000318"/>
    <property type="project" value="GO_Central"/>
</dbReference>
<dbReference type="GO" id="GO:0007264">
    <property type="term" value="P:small GTPase-mediated signal transduction"/>
    <property type="evidence" value="ECO:0000314"/>
    <property type="project" value="MGI"/>
</dbReference>
<dbReference type="CDD" id="cd15794">
    <property type="entry name" value="PH_ARHGEF18"/>
    <property type="match status" value="1"/>
</dbReference>
<dbReference type="CDD" id="cd00160">
    <property type="entry name" value="RhoGEF"/>
    <property type="match status" value="1"/>
</dbReference>
<dbReference type="FunFam" id="1.20.900.10:FF:000004">
    <property type="entry name" value="Rho guanine nucleotide exchange factor 2"/>
    <property type="match status" value="1"/>
</dbReference>
<dbReference type="FunFam" id="2.30.29.30:FF:000021">
    <property type="entry name" value="Rho guanine nucleotide exchange factor 2"/>
    <property type="match status" value="1"/>
</dbReference>
<dbReference type="Gene3D" id="1.20.900.10">
    <property type="entry name" value="Dbl homology (DH) domain"/>
    <property type="match status" value="1"/>
</dbReference>
<dbReference type="Gene3D" id="2.30.29.30">
    <property type="entry name" value="Pleckstrin-homology domain (PH domain)/Phosphotyrosine-binding domain (PTB)"/>
    <property type="match status" value="1"/>
</dbReference>
<dbReference type="InterPro" id="IPR037744">
    <property type="entry name" value="ARHGEF18_PH"/>
</dbReference>
<dbReference type="InterPro" id="IPR035899">
    <property type="entry name" value="DBL_dom_sf"/>
</dbReference>
<dbReference type="InterPro" id="IPR000219">
    <property type="entry name" value="DH_dom"/>
</dbReference>
<dbReference type="InterPro" id="IPR011993">
    <property type="entry name" value="PH-like_dom_sf"/>
</dbReference>
<dbReference type="InterPro" id="IPR041020">
    <property type="entry name" value="PH_16"/>
</dbReference>
<dbReference type="InterPro" id="IPR001849">
    <property type="entry name" value="PH_domain"/>
</dbReference>
<dbReference type="InterPro" id="IPR053089">
    <property type="entry name" value="Rho_GEF18"/>
</dbReference>
<dbReference type="InterPro" id="IPR013087">
    <property type="entry name" value="Znf_C2H2_type"/>
</dbReference>
<dbReference type="PANTHER" id="PTHR47440:SF1">
    <property type="entry name" value="RHO_RAC GUANINE NUCLEOTIDE EXCHANGE FACTOR 18"/>
    <property type="match status" value="1"/>
</dbReference>
<dbReference type="PANTHER" id="PTHR47440">
    <property type="entry name" value="RIKEN CDNA A430078G23 GENE"/>
    <property type="match status" value="1"/>
</dbReference>
<dbReference type="Pfam" id="PF17838">
    <property type="entry name" value="PH_16"/>
    <property type="match status" value="1"/>
</dbReference>
<dbReference type="Pfam" id="PF00621">
    <property type="entry name" value="RhoGEF"/>
    <property type="match status" value="1"/>
</dbReference>
<dbReference type="SMART" id="SM00233">
    <property type="entry name" value="PH"/>
    <property type="match status" value="1"/>
</dbReference>
<dbReference type="SMART" id="SM00325">
    <property type="entry name" value="RhoGEF"/>
    <property type="match status" value="1"/>
</dbReference>
<dbReference type="SUPFAM" id="SSF48065">
    <property type="entry name" value="DBL homology domain (DH-domain)"/>
    <property type="match status" value="1"/>
</dbReference>
<dbReference type="SUPFAM" id="SSF50729">
    <property type="entry name" value="PH domain-like"/>
    <property type="match status" value="1"/>
</dbReference>
<dbReference type="PROSITE" id="PS50010">
    <property type="entry name" value="DH_2"/>
    <property type="match status" value="1"/>
</dbReference>
<dbReference type="PROSITE" id="PS50003">
    <property type="entry name" value="PH_DOMAIN"/>
    <property type="match status" value="1"/>
</dbReference>
<dbReference type="PROSITE" id="PS50157">
    <property type="entry name" value="ZINC_FINGER_C2H2_2"/>
    <property type="match status" value="1"/>
</dbReference>
<accession>Q6ZSZ5</accession>
<accession>A8MV62</accession>
<accession>B5ME81</accession>
<accession>I3L1I5</accession>
<accession>O60274</accession>
<accession>Q6DD92</accession>
<evidence type="ECO:0000250" key="1">
    <source>
        <dbReference type="UniProtKB" id="Q6P9R4"/>
    </source>
</evidence>
<evidence type="ECO:0000255" key="2"/>
<evidence type="ECO:0000255" key="3">
    <source>
        <dbReference type="PROSITE-ProRule" id="PRU00042"/>
    </source>
</evidence>
<evidence type="ECO:0000255" key="4">
    <source>
        <dbReference type="PROSITE-ProRule" id="PRU00062"/>
    </source>
</evidence>
<evidence type="ECO:0000255" key="5">
    <source>
        <dbReference type="PROSITE-ProRule" id="PRU00145"/>
    </source>
</evidence>
<evidence type="ECO:0000256" key="6">
    <source>
        <dbReference type="SAM" id="MobiDB-lite"/>
    </source>
</evidence>
<evidence type="ECO:0000269" key="7">
    <source>
    </source>
</evidence>
<evidence type="ECO:0000269" key="8">
    <source>
    </source>
</evidence>
<evidence type="ECO:0000269" key="9">
    <source>
    </source>
</evidence>
<evidence type="ECO:0000269" key="10">
    <source>
    </source>
</evidence>
<evidence type="ECO:0000269" key="11">
    <source>
    </source>
</evidence>
<evidence type="ECO:0000269" key="12">
    <source>
    </source>
</evidence>
<evidence type="ECO:0000269" key="13">
    <source>
    </source>
</evidence>
<evidence type="ECO:0000269" key="14">
    <source>
    </source>
</evidence>
<evidence type="ECO:0000303" key="15">
    <source>
    </source>
</evidence>
<evidence type="ECO:0000305" key="16"/>
<proteinExistence type="evidence at protein level"/>
<comment type="function">
    <text evidence="7 8 10 11 12">Acts as a guanine nucleotide exchange factor (GEF) for RhoA GTPases. Its activation induces formation of actin stress fibers. Also acts as a GEF for RAC1, inducing production of reactive oxygen species (ROS). Does not act as a GEF for CDC42. The G protein beta-gamma (Gbetagamma) subunits of heterotrimeric G proteins act as activators, explaining the integrated effects of LPA and other G-protein coupled receptor agonists on actin stress fiber formation, cell shape change and ROS production. Required for EPB41L4B-mediated regulation of the circumferential actomyosin belt in epithelial cells (PubMed:22006950).</text>
</comment>
<comment type="subunit">
    <text evidence="8 10 11">Interacts with SEPT9; the interaction may inhibit GEF activity (PubMed:15558029). Interacts with Gbetagamma subunits GNB1 and GNG2 (PubMed:14512443). Interacts with EPB41L4B (PubMed:22006950). Interacts with PATJ (via C-terminus) (PubMed:22006950).</text>
</comment>
<comment type="interaction">
    <interactant intactId="EBI-2825649">
        <id>Q6ZSZ5</id>
    </interactant>
    <interactant intactId="EBI-1373806">
        <id>Q12802</id>
        <label>AKAP13</label>
    </interactant>
    <organismsDiffer>false</organismsDiffer>
    <experiments>2</experiments>
</comment>
<comment type="subcellular location">
    <subcellularLocation>
        <location evidence="10">Cytoplasm</location>
    </subcellularLocation>
    <subcellularLocation>
        <location evidence="10">Cytoplasm</location>
        <location evidence="10">Cytoskeleton</location>
    </subcellularLocation>
    <subcellularLocation>
        <location evidence="13">Cell membrane</location>
    </subcellularLocation>
    <subcellularLocation>
        <location evidence="11">Apical cell membrane</location>
    </subcellularLocation>
    <text evidence="11 13">In unactivated eosinophils, distributed around the cell periphery in the perimembranous region (PubMed:29601110). In activated eosinophils, relocates to the tip of the nucleopod, a membrane structure formed during activation when the nucleus moves to one end of the cell, and is also concentrated in membrane protrusions at the opposite end of the cell (PubMed:29601110). Localizes to the apical cell membrane in epithelial cells (PubMed:22006950).</text>
</comment>
<comment type="alternative products">
    <event type="alternative splicing"/>
    <isoform>
        <id>Q6ZSZ5-4</id>
        <name>1</name>
        <name evidence="15">LOCGEF-X3</name>
        <sequence type="displayed"/>
    </isoform>
    <isoform>
        <id>Q6ZSZ5-5</id>
        <name>2</name>
        <name evidence="15">LOCGEF-X4</name>
        <sequence type="described" ref="VSP_059877"/>
    </isoform>
    <isoform>
        <id>Q6ZSZ5-6</id>
        <name>3</name>
        <name evidence="15">LOCGEF-X5</name>
        <sequence type="described" ref="VSP_059876"/>
    </isoform>
    <isoform>
        <id>Q6ZSZ5-2</id>
        <name>4</name>
        <name evidence="15">p114</name>
        <sequence type="described" ref="VSP_059874"/>
    </isoform>
    <isoform>
        <id>Q6ZSZ5-1</id>
        <name>5</name>
        <sequence type="described" ref="VSP_059875"/>
    </isoform>
</comment>
<comment type="tissue specificity">
    <text evidence="7 8 10 13">Expressed in all tissues tested with highest expression in kidney and pancreas. Weakly or not expressed in liver, skeletal muscle and testis. Isoform 1: Expressed in eosinophils (PubMed:29601110). Isoform 2: Expressed in eosinophils (PubMed:29601110). Isoform 3: Expressed in eosinophils (PubMed:29601110). Isoform 4: Not detected in eosinophils (PubMed:29601110).</text>
</comment>
<comment type="disease" evidence="12">
    <disease id="DI-04985">
        <name>Retinitis pigmentosa 78</name>
        <acronym>RP78</acronym>
        <description>A form of retinitis pigmentosa, a retinal dystrophy belonging to the group of pigmentary retinopathies. Retinitis pigmentosa is characterized by retinal pigment deposits visible on fundus examination and primary loss of rod photoreceptor cells followed by secondary loss of cone photoreceptors. Patients typically have night vision blindness and loss of midperipheral visual field. As their condition progresses, they lose their far peripheral visual field and eventually central vision as well. RP78 inheritance is autosomal recessive.</description>
        <dbReference type="MIM" id="617433"/>
    </disease>
    <text>The disease is caused by variants affecting the gene represented in this entry.</text>
</comment>
<comment type="sequence caution" evidence="16">
    <conflict type="miscellaneous discrepancy">
        <sequence resource="EMBL-CDS" id="AAH77721"/>
    </conflict>
    <text>Aberrant splicing.</text>
</comment>
<comment type="sequence caution" evidence="16">
    <conflict type="erroneous initiation">
        <sequence resource="EMBL-CDS" id="BAA25447"/>
    </conflict>
    <text>Extended N-terminus.</text>
</comment>